<name>CYAY_HAEIN</name>
<keyword id="KW-0408">Iron</keyword>
<keyword id="KW-0479">Metal-binding</keyword>
<keyword id="KW-1185">Reference proteome</keyword>
<dbReference type="EMBL" id="L42023">
    <property type="protein sequence ID" value="AAC22386.1"/>
    <property type="molecule type" value="Genomic_DNA"/>
</dbReference>
<dbReference type="RefSeq" id="NP_438886.1">
    <property type="nucleotide sequence ID" value="NC_000907.1"/>
</dbReference>
<dbReference type="SMR" id="P71358"/>
<dbReference type="STRING" id="71421.HI_0727.1"/>
<dbReference type="EnsemblBacteria" id="AAC22386">
    <property type="protein sequence ID" value="AAC22386"/>
    <property type="gene ID" value="HI_0727.1"/>
</dbReference>
<dbReference type="KEGG" id="hin:HI_0727.1"/>
<dbReference type="PATRIC" id="fig|71421.8.peg.761"/>
<dbReference type="eggNOG" id="COG1965">
    <property type="taxonomic scope" value="Bacteria"/>
</dbReference>
<dbReference type="HOGENOM" id="CLU_080880_3_0_6"/>
<dbReference type="OrthoDB" id="285675at2"/>
<dbReference type="PhylomeDB" id="P71358"/>
<dbReference type="BioCyc" id="HINF71421:G1GJ1-767-MONOMER"/>
<dbReference type="Proteomes" id="UP000000579">
    <property type="component" value="Chromosome"/>
</dbReference>
<dbReference type="GO" id="GO:0005829">
    <property type="term" value="C:cytosol"/>
    <property type="evidence" value="ECO:0000318"/>
    <property type="project" value="GO_Central"/>
</dbReference>
<dbReference type="GO" id="GO:0008199">
    <property type="term" value="F:ferric iron binding"/>
    <property type="evidence" value="ECO:0000318"/>
    <property type="project" value="GO_Central"/>
</dbReference>
<dbReference type="GO" id="GO:0008198">
    <property type="term" value="F:ferrous iron binding"/>
    <property type="evidence" value="ECO:0000318"/>
    <property type="project" value="GO_Central"/>
</dbReference>
<dbReference type="GO" id="GO:0016226">
    <property type="term" value="P:iron-sulfur cluster assembly"/>
    <property type="evidence" value="ECO:0000318"/>
    <property type="project" value="GO_Central"/>
</dbReference>
<dbReference type="CDD" id="cd00503">
    <property type="entry name" value="Frataxin"/>
    <property type="match status" value="1"/>
</dbReference>
<dbReference type="FunFam" id="3.30.920.10:FF:000009">
    <property type="entry name" value="Iron-sulfur cluster assembly protein CyaY"/>
    <property type="match status" value="1"/>
</dbReference>
<dbReference type="Gene3D" id="3.30.920.10">
    <property type="entry name" value="Frataxin/CyaY"/>
    <property type="match status" value="1"/>
</dbReference>
<dbReference type="HAMAP" id="MF_00142">
    <property type="entry name" value="CyaY"/>
    <property type="match status" value="1"/>
</dbReference>
<dbReference type="InterPro" id="IPR047584">
    <property type="entry name" value="CyaY"/>
</dbReference>
<dbReference type="InterPro" id="IPR002908">
    <property type="entry name" value="Frataxin/CyaY"/>
</dbReference>
<dbReference type="InterPro" id="IPR036524">
    <property type="entry name" value="Frataxin/CyaY_sf"/>
</dbReference>
<dbReference type="InterPro" id="IPR020895">
    <property type="entry name" value="Frataxin_CS"/>
</dbReference>
<dbReference type="NCBIfam" id="TIGR03421">
    <property type="entry name" value="FeS_CyaY"/>
    <property type="match status" value="1"/>
</dbReference>
<dbReference type="PANTHER" id="PTHR16821">
    <property type="entry name" value="FRATAXIN"/>
    <property type="match status" value="1"/>
</dbReference>
<dbReference type="PANTHER" id="PTHR16821:SF2">
    <property type="entry name" value="FRATAXIN, MITOCHONDRIAL"/>
    <property type="match status" value="1"/>
</dbReference>
<dbReference type="Pfam" id="PF01491">
    <property type="entry name" value="Frataxin_Cyay"/>
    <property type="match status" value="1"/>
</dbReference>
<dbReference type="SMART" id="SM01219">
    <property type="entry name" value="Frataxin_Cyay"/>
    <property type="match status" value="1"/>
</dbReference>
<dbReference type="SUPFAM" id="SSF55387">
    <property type="entry name" value="Frataxin/Nqo15-like"/>
    <property type="match status" value="1"/>
</dbReference>
<dbReference type="PROSITE" id="PS01344">
    <property type="entry name" value="FRATAXIN_1"/>
    <property type="match status" value="1"/>
</dbReference>
<dbReference type="PROSITE" id="PS50810">
    <property type="entry name" value="FRATAXIN_2"/>
    <property type="match status" value="1"/>
</dbReference>
<reference key="1">
    <citation type="journal article" date="1995" name="Science">
        <title>Whole-genome random sequencing and assembly of Haemophilus influenzae Rd.</title>
        <authorList>
            <person name="Fleischmann R.D."/>
            <person name="Adams M.D."/>
            <person name="White O."/>
            <person name="Clayton R.A."/>
            <person name="Kirkness E.F."/>
            <person name="Kerlavage A.R."/>
            <person name="Bult C.J."/>
            <person name="Tomb J.-F."/>
            <person name="Dougherty B.A."/>
            <person name="Merrick J.M."/>
            <person name="McKenney K."/>
            <person name="Sutton G.G."/>
            <person name="FitzHugh W."/>
            <person name="Fields C.A."/>
            <person name="Gocayne J.D."/>
            <person name="Scott J.D."/>
            <person name="Shirley R."/>
            <person name="Liu L.-I."/>
            <person name="Glodek A."/>
            <person name="Kelley J.M."/>
            <person name="Weidman J.F."/>
            <person name="Phillips C.A."/>
            <person name="Spriggs T."/>
            <person name="Hedblom E."/>
            <person name="Cotton M.D."/>
            <person name="Utterback T.R."/>
            <person name="Hanna M.C."/>
            <person name="Nguyen D.T."/>
            <person name="Saudek D.M."/>
            <person name="Brandon R.C."/>
            <person name="Fine L.D."/>
            <person name="Fritchman J.L."/>
            <person name="Fuhrmann J.L."/>
            <person name="Geoghagen N.S.M."/>
            <person name="Gnehm C.L."/>
            <person name="McDonald L.A."/>
            <person name="Small K.V."/>
            <person name="Fraser C.M."/>
            <person name="Smith H.O."/>
            <person name="Venter J.C."/>
        </authorList>
    </citation>
    <scope>NUCLEOTIDE SEQUENCE [LARGE SCALE GENOMIC DNA]</scope>
    <source>
        <strain>ATCC 51907 / DSM 11121 / KW20 / Rd</strain>
    </source>
</reference>
<reference key="2">
    <citation type="submission" date="1996-09" db="EMBL/GenBank/DDBJ databases">
        <authorList>
            <person name="White O."/>
            <person name="Clayton R.A."/>
            <person name="Kerlavage A.R."/>
            <person name="Fleischmann R.D."/>
        </authorList>
    </citation>
    <scope>IDENTIFICATION</scope>
</reference>
<feature type="chain" id="PRO_0000193941" description="Iron-sulfur cluster assembly protein CyaY">
    <location>
        <begin position="1"/>
        <end position="101"/>
    </location>
</feature>
<protein>
    <recommendedName>
        <fullName evidence="1">Iron-sulfur cluster assembly protein CyaY</fullName>
    </recommendedName>
</protein>
<organism>
    <name type="scientific">Haemophilus influenzae (strain ATCC 51907 / DSM 11121 / KW20 / Rd)</name>
    <dbReference type="NCBI Taxonomy" id="71421"/>
    <lineage>
        <taxon>Bacteria</taxon>
        <taxon>Pseudomonadati</taxon>
        <taxon>Pseudomonadota</taxon>
        <taxon>Gammaproteobacteria</taxon>
        <taxon>Pasteurellales</taxon>
        <taxon>Pasteurellaceae</taxon>
        <taxon>Haemophilus</taxon>
    </lineage>
</organism>
<gene>
    <name evidence="1" type="primary">cyaY</name>
    <name type="ordered locus">HI_0727.1</name>
</gene>
<evidence type="ECO:0000255" key="1">
    <source>
        <dbReference type="HAMAP-Rule" id="MF_00142"/>
    </source>
</evidence>
<evidence type="ECO:0000305" key="2"/>
<sequence>MNIAEFHQNIEQVWQKIEEELENQGADVDCETQGSVFTITFDNRTQIVINKQEPLLELWIASKLGGFHFAFKNGDWVSNDGQRFWDCFVEACAAHGENVQF</sequence>
<comment type="function">
    <text evidence="1">Involved in iron-sulfur (Fe-S) cluster assembly. May act as a regulator of Fe-S biogenesis.</text>
</comment>
<comment type="similarity">
    <text evidence="1 2">Belongs to the frataxin family.</text>
</comment>
<proteinExistence type="inferred from homology"/>
<accession>P71358</accession>